<feature type="chain" id="PRO_1000091860" description="3-deoxy-manno-octulosonate cytidylyltransferase">
    <location>
        <begin position="1"/>
        <end position="254"/>
    </location>
</feature>
<keyword id="KW-0963">Cytoplasm</keyword>
<keyword id="KW-0448">Lipopolysaccharide biosynthesis</keyword>
<keyword id="KW-0548">Nucleotidyltransferase</keyword>
<keyword id="KW-0808">Transferase</keyword>
<gene>
    <name evidence="1" type="primary">kdsB</name>
    <name type="ordered locus">BB2006</name>
</gene>
<proteinExistence type="inferred from homology"/>
<reference key="1">
    <citation type="journal article" date="2003" name="Nat. Genet.">
        <title>Comparative analysis of the genome sequences of Bordetella pertussis, Bordetella parapertussis and Bordetella bronchiseptica.</title>
        <authorList>
            <person name="Parkhill J."/>
            <person name="Sebaihia M."/>
            <person name="Preston A."/>
            <person name="Murphy L.D."/>
            <person name="Thomson N.R."/>
            <person name="Harris D.E."/>
            <person name="Holden M.T.G."/>
            <person name="Churcher C.M."/>
            <person name="Bentley S.D."/>
            <person name="Mungall K.L."/>
            <person name="Cerdeno-Tarraga A.-M."/>
            <person name="Temple L."/>
            <person name="James K.D."/>
            <person name="Harris B."/>
            <person name="Quail M.A."/>
            <person name="Achtman M."/>
            <person name="Atkin R."/>
            <person name="Baker S."/>
            <person name="Basham D."/>
            <person name="Bason N."/>
            <person name="Cherevach I."/>
            <person name="Chillingworth T."/>
            <person name="Collins M."/>
            <person name="Cronin A."/>
            <person name="Davis P."/>
            <person name="Doggett J."/>
            <person name="Feltwell T."/>
            <person name="Goble A."/>
            <person name="Hamlin N."/>
            <person name="Hauser H."/>
            <person name="Holroyd S."/>
            <person name="Jagels K."/>
            <person name="Leather S."/>
            <person name="Moule S."/>
            <person name="Norberczak H."/>
            <person name="O'Neil S."/>
            <person name="Ormond D."/>
            <person name="Price C."/>
            <person name="Rabbinowitsch E."/>
            <person name="Rutter S."/>
            <person name="Sanders M."/>
            <person name="Saunders D."/>
            <person name="Seeger K."/>
            <person name="Sharp S."/>
            <person name="Simmonds M."/>
            <person name="Skelton J."/>
            <person name="Squares R."/>
            <person name="Squares S."/>
            <person name="Stevens K."/>
            <person name="Unwin L."/>
            <person name="Whitehead S."/>
            <person name="Barrell B.G."/>
            <person name="Maskell D.J."/>
        </authorList>
    </citation>
    <scope>NUCLEOTIDE SEQUENCE [LARGE SCALE GENOMIC DNA]</scope>
    <source>
        <strain>ATCC BAA-588 / NCTC 13252 / RB50</strain>
    </source>
</reference>
<protein>
    <recommendedName>
        <fullName evidence="1">3-deoxy-manno-octulosonate cytidylyltransferase</fullName>
        <ecNumber evidence="1">2.7.7.38</ecNumber>
    </recommendedName>
    <alternativeName>
        <fullName evidence="1">CMP-2-keto-3-deoxyoctulosonic acid synthase</fullName>
        <shortName evidence="1">CKS</shortName>
        <shortName evidence="1">CMP-KDO synthase</shortName>
    </alternativeName>
</protein>
<sequence>MSFTVLIPARLASTRLPDKPLADIAGKPMVVRVAERAALSGAERVMIATDDARVQQAAADHGHAAILTRPDHPTGTDRLSEAVDALGLPDDAIVVNVQGDEPLIEPALIDAVAAQLVAAPHADIATCACPLADAEALFDPNVVKVVCAADRRALYFSRAPIPWARDALAGGARVLAPGLPAWHHIGIYAYRVAFLRRFPALSQGQLERYESLEQLRAMEHGHVIVVHHTDSAPAAGVDTPADLERARAAYTNRL</sequence>
<evidence type="ECO:0000255" key="1">
    <source>
        <dbReference type="HAMAP-Rule" id="MF_00057"/>
    </source>
</evidence>
<comment type="function">
    <text evidence="1">Activates KDO (a required 8-carbon sugar) for incorporation into bacterial lipopolysaccharide in Gram-negative bacteria.</text>
</comment>
<comment type="catalytic activity">
    <reaction evidence="1">
        <text>3-deoxy-alpha-D-manno-oct-2-ulosonate + CTP = CMP-3-deoxy-beta-D-manno-octulosonate + diphosphate</text>
        <dbReference type="Rhea" id="RHEA:23448"/>
        <dbReference type="ChEBI" id="CHEBI:33019"/>
        <dbReference type="ChEBI" id="CHEBI:37563"/>
        <dbReference type="ChEBI" id="CHEBI:85986"/>
        <dbReference type="ChEBI" id="CHEBI:85987"/>
        <dbReference type="EC" id="2.7.7.38"/>
    </reaction>
</comment>
<comment type="pathway">
    <text evidence="1">Nucleotide-sugar biosynthesis; CMP-3-deoxy-D-manno-octulosonate biosynthesis; CMP-3-deoxy-D-manno-octulosonate from 3-deoxy-D-manno-octulosonate and CTP: step 1/1.</text>
</comment>
<comment type="pathway">
    <text evidence="1">Bacterial outer membrane biogenesis; lipopolysaccharide biosynthesis.</text>
</comment>
<comment type="subcellular location">
    <subcellularLocation>
        <location evidence="1">Cytoplasm</location>
    </subcellularLocation>
</comment>
<comment type="similarity">
    <text evidence="1">Belongs to the KdsB family.</text>
</comment>
<organism>
    <name type="scientific">Bordetella bronchiseptica (strain ATCC BAA-588 / NCTC 13252 / RB50)</name>
    <name type="common">Alcaligenes bronchisepticus</name>
    <dbReference type="NCBI Taxonomy" id="257310"/>
    <lineage>
        <taxon>Bacteria</taxon>
        <taxon>Pseudomonadati</taxon>
        <taxon>Pseudomonadota</taxon>
        <taxon>Betaproteobacteria</taxon>
        <taxon>Burkholderiales</taxon>
        <taxon>Alcaligenaceae</taxon>
        <taxon>Bordetella</taxon>
    </lineage>
</organism>
<dbReference type="EC" id="2.7.7.38" evidence="1"/>
<dbReference type="EMBL" id="BX640443">
    <property type="protein sequence ID" value="CAE32503.1"/>
    <property type="molecule type" value="Genomic_DNA"/>
</dbReference>
<dbReference type="RefSeq" id="WP_003812897.1">
    <property type="nucleotide sequence ID" value="NC_002927.3"/>
</dbReference>
<dbReference type="SMR" id="Q7WKU7"/>
<dbReference type="KEGG" id="bbr:BB2006"/>
<dbReference type="eggNOG" id="COG1212">
    <property type="taxonomic scope" value="Bacteria"/>
</dbReference>
<dbReference type="HOGENOM" id="CLU_065038_1_0_4"/>
<dbReference type="UniPathway" id="UPA00030"/>
<dbReference type="UniPathway" id="UPA00358">
    <property type="reaction ID" value="UER00476"/>
</dbReference>
<dbReference type="Proteomes" id="UP000001027">
    <property type="component" value="Chromosome"/>
</dbReference>
<dbReference type="GO" id="GO:0005829">
    <property type="term" value="C:cytosol"/>
    <property type="evidence" value="ECO:0007669"/>
    <property type="project" value="TreeGrafter"/>
</dbReference>
<dbReference type="GO" id="GO:0008690">
    <property type="term" value="F:3-deoxy-manno-octulosonate cytidylyltransferase activity"/>
    <property type="evidence" value="ECO:0007669"/>
    <property type="project" value="UniProtKB-UniRule"/>
</dbReference>
<dbReference type="GO" id="GO:0033468">
    <property type="term" value="P:CMP-keto-3-deoxy-D-manno-octulosonic acid biosynthetic process"/>
    <property type="evidence" value="ECO:0007669"/>
    <property type="project" value="UniProtKB-UniRule"/>
</dbReference>
<dbReference type="GO" id="GO:0009103">
    <property type="term" value="P:lipopolysaccharide biosynthetic process"/>
    <property type="evidence" value="ECO:0007669"/>
    <property type="project" value="UniProtKB-UniRule"/>
</dbReference>
<dbReference type="CDD" id="cd02517">
    <property type="entry name" value="CMP-KDO-Synthetase"/>
    <property type="match status" value="1"/>
</dbReference>
<dbReference type="FunFam" id="3.90.550.10:FF:000011">
    <property type="entry name" value="3-deoxy-manno-octulosonate cytidylyltransferase"/>
    <property type="match status" value="1"/>
</dbReference>
<dbReference type="Gene3D" id="3.90.550.10">
    <property type="entry name" value="Spore Coat Polysaccharide Biosynthesis Protein SpsA, Chain A"/>
    <property type="match status" value="1"/>
</dbReference>
<dbReference type="HAMAP" id="MF_00057">
    <property type="entry name" value="KdsB"/>
    <property type="match status" value="1"/>
</dbReference>
<dbReference type="InterPro" id="IPR003329">
    <property type="entry name" value="Cytidylyl_trans"/>
</dbReference>
<dbReference type="InterPro" id="IPR004528">
    <property type="entry name" value="KdsB"/>
</dbReference>
<dbReference type="InterPro" id="IPR029044">
    <property type="entry name" value="Nucleotide-diphossugar_trans"/>
</dbReference>
<dbReference type="NCBIfam" id="TIGR00466">
    <property type="entry name" value="kdsB"/>
    <property type="match status" value="1"/>
</dbReference>
<dbReference type="NCBIfam" id="NF003950">
    <property type="entry name" value="PRK05450.1-3"/>
    <property type="match status" value="1"/>
</dbReference>
<dbReference type="NCBIfam" id="NF003952">
    <property type="entry name" value="PRK05450.1-5"/>
    <property type="match status" value="1"/>
</dbReference>
<dbReference type="NCBIfam" id="NF009905">
    <property type="entry name" value="PRK13368.1"/>
    <property type="match status" value="1"/>
</dbReference>
<dbReference type="PANTHER" id="PTHR42866">
    <property type="entry name" value="3-DEOXY-MANNO-OCTULOSONATE CYTIDYLYLTRANSFERASE"/>
    <property type="match status" value="1"/>
</dbReference>
<dbReference type="PANTHER" id="PTHR42866:SF2">
    <property type="entry name" value="3-DEOXY-MANNO-OCTULOSONATE CYTIDYLYLTRANSFERASE, MITOCHONDRIAL"/>
    <property type="match status" value="1"/>
</dbReference>
<dbReference type="Pfam" id="PF02348">
    <property type="entry name" value="CTP_transf_3"/>
    <property type="match status" value="1"/>
</dbReference>
<dbReference type="SUPFAM" id="SSF53448">
    <property type="entry name" value="Nucleotide-diphospho-sugar transferases"/>
    <property type="match status" value="1"/>
</dbReference>
<accession>Q7WKU7</accession>
<name>KDSB_BORBR</name>